<organism>
    <name type="scientific">Rattus norvegicus</name>
    <name type="common">Rat</name>
    <dbReference type="NCBI Taxonomy" id="10116"/>
    <lineage>
        <taxon>Eukaryota</taxon>
        <taxon>Metazoa</taxon>
        <taxon>Chordata</taxon>
        <taxon>Craniata</taxon>
        <taxon>Vertebrata</taxon>
        <taxon>Euteleostomi</taxon>
        <taxon>Mammalia</taxon>
        <taxon>Eutheria</taxon>
        <taxon>Euarchontoglires</taxon>
        <taxon>Glires</taxon>
        <taxon>Rodentia</taxon>
        <taxon>Myomorpha</taxon>
        <taxon>Muroidea</taxon>
        <taxon>Muridae</taxon>
        <taxon>Murinae</taxon>
        <taxon>Rattus</taxon>
    </lineage>
</organism>
<feature type="signal peptide" evidence="2">
    <location>
        <begin position="1"/>
        <end position="45"/>
    </location>
</feature>
<feature type="chain" id="PRO_0000030174" description="Receptor activity-modifying protein 2">
    <location>
        <begin position="46"/>
        <end position="182"/>
    </location>
</feature>
<feature type="topological domain" description="Extracellular" evidence="2">
    <location>
        <begin position="46"/>
        <end position="150"/>
    </location>
</feature>
<feature type="transmembrane region" description="Helical" evidence="1">
    <location>
        <begin position="151"/>
        <end position="172"/>
    </location>
</feature>
<feature type="topological domain" description="Cytoplasmic" evidence="2">
    <location>
        <begin position="173"/>
        <end position="182"/>
    </location>
</feature>
<feature type="site" description="Required for CALCRL interaction" evidence="1">
    <location>
        <position position="146"/>
    </location>
</feature>
<feature type="glycosylation site" description="N-linked (GlcNAc...) asparagine" evidence="2">
    <location>
        <position position="51"/>
    </location>
</feature>
<feature type="glycosylation site" description="N-linked (GlcNAc...) asparagine" evidence="2">
    <location>
        <position position="92"/>
    </location>
</feature>
<feature type="glycosylation site" description="N-linked (GlcNAc...) asparagine" evidence="2">
    <location>
        <position position="137"/>
    </location>
</feature>
<feature type="disulfide bond" evidence="1">
    <location>
        <begin position="76"/>
        <end position="106"/>
    </location>
</feature>
<feature type="disulfide bond" evidence="1">
    <location>
        <begin position="91"/>
        <end position="138"/>
    </location>
</feature>
<comment type="function">
    <text evidence="1 3">Accessory protein that interacts with and modulates the function of G-protein coupled receptors including calcitonin gene-related peptide type 1 receptor (CALCRL) and calcitonin receptor (CALCR) (PubMed:11556887). Required for the transport of CALCRL to the plasma membrane (By similarity). Together with CALCRL, form a receptor complex for adrenomedullin/ADM (PubMed:11556887). Together with CALCR, act as a receptor complex for calcitonin/CT/CALC. Together with CALCR, also act as a receptor complex for amylin/IAPP (By similarity).</text>
</comment>
<comment type="subunit">
    <text evidence="1">Heterodimer of CALCRL and RAMP2; the interaction forms the receptor complex for adrenomedullin/ADM. Heterodimer of CALCR and RAMP2; interaction forms the AMYR2 receptor complex for calcitonin/CALC and amylin/IAPP.</text>
</comment>
<comment type="subcellular location">
    <subcellularLocation>
        <location evidence="1">Cell membrane</location>
        <topology evidence="1">Single-pass type I membrane protein</topology>
    </subcellularLocation>
</comment>
<comment type="similarity">
    <text evidence="4">Belongs to the RAMP family.</text>
</comment>
<protein>
    <recommendedName>
        <fullName>Receptor activity-modifying protein 2</fullName>
    </recommendedName>
</protein>
<accession>Q9JHJ1</accession>
<gene>
    <name evidence="5" type="primary">Ramp2</name>
</gene>
<evidence type="ECO:0000250" key="1">
    <source>
        <dbReference type="UniProtKB" id="O60895"/>
    </source>
</evidence>
<evidence type="ECO:0000255" key="2"/>
<evidence type="ECO:0000269" key="3">
    <source>
    </source>
</evidence>
<evidence type="ECO:0000305" key="4"/>
<evidence type="ECO:0000312" key="5">
    <source>
        <dbReference type="RGD" id="61872"/>
    </source>
</evidence>
<sequence>MAPLRVERAPGGSQLAVTSAQRPAALRLPPLLLLLLLLLLGAVSTSPESLNQSHPTEDSLLSKGKMEDYETNVLPCWYYYKTSMDSVKDWCNWTLISRYYSNLRYCLEYEADKFGLGFPNPLAESIILEAHLIHFANCSLVQPTFSDPPEDVLLAMIIAPICLIPFLVTLVVWRSKDGDAQA</sequence>
<name>RAMP2_RAT</name>
<reference key="1">
    <citation type="journal article" date="2001" name="Cardiovasc. Res.">
        <title>Cardiac fibroblasts are major production and target cells of adrenomedullin in the heart in vitro.</title>
        <authorList>
            <person name="Tomoda Y."/>
            <person name="Kikumoto K."/>
            <person name="Isumi Y."/>
            <person name="Katafuchi T."/>
            <person name="Tanaka A."/>
            <person name="Kangawa K."/>
            <person name="Dohi K."/>
            <person name="Minamino N."/>
        </authorList>
    </citation>
    <scope>NUCLEOTIDE SEQUENCE [MRNA]</scope>
    <source>
        <strain>Sprague-Dawley</strain>
        <tissue>Brain</tissue>
    </source>
</reference>
<reference key="2">
    <citation type="journal article" date="2000" name="Biochem. Biophys. Res. Commun.">
        <title>Rat receptor-activity-modifying proteins (RAMPs) for adrenomedullin/CGRP receptor: cloning and upregulation in obstructive nephropathy.</title>
        <authorList>
            <person name="Nagae T."/>
            <person name="Mukoyama M."/>
            <person name="Sugawara A."/>
            <person name="Mori K."/>
            <person name="Yahata K."/>
            <person name="Kasahara M."/>
            <person name="Suganami T."/>
            <person name="Makino H."/>
            <person name="Fujinaga Y."/>
            <person name="Yoshioka T."/>
            <person name="Tanaka I."/>
            <person name="Nakao K."/>
        </authorList>
    </citation>
    <scope>NUCLEOTIDE SEQUENCE [MRNA]</scope>
    <source>
        <strain>Wistar</strain>
    </source>
</reference>
<reference key="3">
    <citation type="journal article" date="2001" name="Eur. J. Neurosci.">
        <title>Cloning, characterization and central nervous system distribution of receptor activity modifying proteins in the rat.</title>
        <authorList>
            <person name="Oliver K.R."/>
            <person name="Kane S.A."/>
            <person name="Salvatore C.A."/>
            <person name="Mallee J.J."/>
            <person name="Kinsey A.M."/>
            <person name="Koblan K.S."/>
            <person name="Keyvan-Fouladi N."/>
            <person name="Heavens R.P."/>
            <person name="Wainwright A."/>
            <person name="Jacobson M."/>
            <person name="Dickerson I.M."/>
            <person name="Hill R.G."/>
        </authorList>
    </citation>
    <scope>NUCLEOTIDE SEQUENCE [MRNA]</scope>
    <scope>FUNCTION</scope>
    <source>
        <strain>Sprague-Dawley</strain>
        <tissue>Heart</tissue>
    </source>
</reference>
<keyword id="KW-1003">Cell membrane</keyword>
<keyword id="KW-1015">Disulfide bond</keyword>
<keyword id="KW-0325">Glycoprotein</keyword>
<keyword id="KW-0472">Membrane</keyword>
<keyword id="KW-0675">Receptor</keyword>
<keyword id="KW-1185">Reference proteome</keyword>
<keyword id="KW-0732">Signal</keyword>
<keyword id="KW-0812">Transmembrane</keyword>
<keyword id="KW-1133">Transmembrane helix</keyword>
<keyword id="KW-0813">Transport</keyword>
<proteinExistence type="evidence at transcript level"/>
<dbReference type="EMBL" id="AB042888">
    <property type="protein sequence ID" value="BAB03505.1"/>
    <property type="molecule type" value="mRNA"/>
</dbReference>
<dbReference type="EMBL" id="AB030943">
    <property type="protein sequence ID" value="BAA94426.1"/>
    <property type="molecule type" value="mRNA"/>
</dbReference>
<dbReference type="EMBL" id="AF181551">
    <property type="protein sequence ID" value="AAG09435.1"/>
    <property type="molecule type" value="mRNA"/>
</dbReference>
<dbReference type="PIR" id="JC7236">
    <property type="entry name" value="JC7236"/>
</dbReference>
<dbReference type="RefSeq" id="NP_113834.1">
    <property type="nucleotide sequence ID" value="NM_031646.2"/>
</dbReference>
<dbReference type="SMR" id="Q9JHJ1"/>
<dbReference type="BioGRID" id="248699">
    <property type="interactions" value="1"/>
</dbReference>
<dbReference type="ComplexPortal" id="CPX-244">
    <property type="entry name" value="Adrenomedullin receptor AM1 complex"/>
</dbReference>
<dbReference type="ComplexPortal" id="CPX-247">
    <property type="entry name" value="Amylin receptor 2 complex"/>
</dbReference>
<dbReference type="FunCoup" id="Q9JHJ1">
    <property type="interactions" value="178"/>
</dbReference>
<dbReference type="STRING" id="10116.ENSRNOP00000043210"/>
<dbReference type="GuidetoPHARMACOLOGY" id="52"/>
<dbReference type="GlyCosmos" id="Q9JHJ1">
    <property type="glycosylation" value="3 sites, No reported glycans"/>
</dbReference>
<dbReference type="GlyGen" id="Q9JHJ1">
    <property type="glycosylation" value="3 sites"/>
</dbReference>
<dbReference type="iPTMnet" id="Q9JHJ1"/>
<dbReference type="PhosphoSitePlus" id="Q9JHJ1"/>
<dbReference type="PaxDb" id="10116-ENSRNOP00000043210"/>
<dbReference type="GeneID" id="58966"/>
<dbReference type="KEGG" id="rno:58966"/>
<dbReference type="UCSC" id="RGD:61872">
    <property type="organism name" value="rat"/>
</dbReference>
<dbReference type="AGR" id="RGD:61872"/>
<dbReference type="CTD" id="10266"/>
<dbReference type="RGD" id="61872">
    <property type="gene designation" value="Ramp2"/>
</dbReference>
<dbReference type="VEuPathDB" id="HostDB:ENSRNOG00000020441"/>
<dbReference type="eggNOG" id="ENOG502S5WC">
    <property type="taxonomic scope" value="Eukaryota"/>
</dbReference>
<dbReference type="InParanoid" id="Q9JHJ1"/>
<dbReference type="PhylomeDB" id="Q9JHJ1"/>
<dbReference type="Reactome" id="R-RNO-419812">
    <property type="pathway name" value="Calcitonin-like ligand receptors"/>
</dbReference>
<dbReference type="Reactome" id="R-RNO-9856530">
    <property type="pathway name" value="High laminar flow shear stress activates signaling by PIEZO1 and PECAM1:CDH5:KDR in endothelial cells"/>
</dbReference>
<dbReference type="PRO" id="PR:Q9JHJ1"/>
<dbReference type="Proteomes" id="UP000002494">
    <property type="component" value="Chromosome 10"/>
</dbReference>
<dbReference type="Bgee" id="ENSRNOG00000020415">
    <property type="expression patterns" value="Expressed in lung and 19 other cell types or tissues"/>
</dbReference>
<dbReference type="ExpressionAtlas" id="Q9JHJ1">
    <property type="expression patterns" value="baseline and differential"/>
</dbReference>
<dbReference type="GO" id="GO:1903143">
    <property type="term" value="C:adrenomedullin receptor complex"/>
    <property type="evidence" value="ECO:0000266"/>
    <property type="project" value="RGD"/>
</dbReference>
<dbReference type="GO" id="GO:0009986">
    <property type="term" value="C:cell surface"/>
    <property type="evidence" value="ECO:0000250"/>
    <property type="project" value="UniProtKB"/>
</dbReference>
<dbReference type="GO" id="GO:0005737">
    <property type="term" value="C:cytoplasm"/>
    <property type="evidence" value="ECO:0000250"/>
    <property type="project" value="UniProtKB"/>
</dbReference>
<dbReference type="GO" id="GO:0005886">
    <property type="term" value="C:plasma membrane"/>
    <property type="evidence" value="ECO:0000266"/>
    <property type="project" value="RGD"/>
</dbReference>
<dbReference type="GO" id="GO:0043235">
    <property type="term" value="C:receptor complex"/>
    <property type="evidence" value="ECO:0000250"/>
    <property type="project" value="UniProtKB"/>
</dbReference>
<dbReference type="GO" id="GO:1990409">
    <property type="term" value="F:adrenomedullin binding"/>
    <property type="evidence" value="ECO:0000266"/>
    <property type="project" value="RGD"/>
</dbReference>
<dbReference type="GO" id="GO:0001605">
    <property type="term" value="F:adrenomedullin receptor activity"/>
    <property type="evidence" value="ECO:0000266"/>
    <property type="project" value="RGD"/>
</dbReference>
<dbReference type="GO" id="GO:0015026">
    <property type="term" value="F:coreceptor activity"/>
    <property type="evidence" value="ECO:0000314"/>
    <property type="project" value="RGD"/>
</dbReference>
<dbReference type="GO" id="GO:0001664">
    <property type="term" value="F:G protein-coupled receptor binding"/>
    <property type="evidence" value="ECO:0000303"/>
    <property type="project" value="RGD"/>
</dbReference>
<dbReference type="GO" id="GO:0007189">
    <property type="term" value="P:adenylate cyclase-activating G protein-coupled receptor signaling pathway"/>
    <property type="evidence" value="ECO:0000266"/>
    <property type="project" value="RGD"/>
</dbReference>
<dbReference type="GO" id="GO:0034333">
    <property type="term" value="P:adherens junction assembly"/>
    <property type="evidence" value="ECO:0000250"/>
    <property type="project" value="UniProtKB"/>
</dbReference>
<dbReference type="GO" id="GO:1990410">
    <property type="term" value="P:adrenomedullin receptor signaling pathway"/>
    <property type="evidence" value="ECO:0000266"/>
    <property type="project" value="RGD"/>
</dbReference>
<dbReference type="GO" id="GO:0150060">
    <property type="term" value="P:amylin receptor 2 signaling pathway"/>
    <property type="evidence" value="ECO:0000266"/>
    <property type="project" value="RGD"/>
</dbReference>
<dbReference type="GO" id="GO:0001525">
    <property type="term" value="P:angiogenesis"/>
    <property type="evidence" value="ECO:0000250"/>
    <property type="project" value="UniProtKB"/>
</dbReference>
<dbReference type="GO" id="GO:0070831">
    <property type="term" value="P:basement membrane assembly"/>
    <property type="evidence" value="ECO:0000250"/>
    <property type="project" value="UniProtKB"/>
</dbReference>
<dbReference type="GO" id="GO:0070830">
    <property type="term" value="P:bicellular tight junction assembly"/>
    <property type="evidence" value="ECO:0000250"/>
    <property type="project" value="UniProtKB"/>
</dbReference>
<dbReference type="GO" id="GO:0006816">
    <property type="term" value="P:calcium ion transport"/>
    <property type="evidence" value="ECO:0000250"/>
    <property type="project" value="UniProtKB"/>
</dbReference>
<dbReference type="GO" id="GO:0032870">
    <property type="term" value="P:cellular response to hormone stimulus"/>
    <property type="evidence" value="ECO:0000270"/>
    <property type="project" value="RGD"/>
</dbReference>
<dbReference type="GO" id="GO:0035924">
    <property type="term" value="P:cellular response to vascular endothelial growth factor stimulus"/>
    <property type="evidence" value="ECO:0000250"/>
    <property type="project" value="UniProtKB"/>
</dbReference>
<dbReference type="GO" id="GO:0007565">
    <property type="term" value="P:female pregnancy"/>
    <property type="evidence" value="ECO:0000270"/>
    <property type="project" value="RGD"/>
</dbReference>
<dbReference type="GO" id="GO:0007186">
    <property type="term" value="P:G protein-coupled receptor signaling pathway"/>
    <property type="evidence" value="ECO:0000266"/>
    <property type="project" value="RGD"/>
</dbReference>
<dbReference type="GO" id="GO:0007507">
    <property type="term" value="P:heart development"/>
    <property type="evidence" value="ECO:0000250"/>
    <property type="project" value="UniProtKB"/>
</dbReference>
<dbReference type="GO" id="GO:0006886">
    <property type="term" value="P:intracellular protein transport"/>
    <property type="evidence" value="ECO:0007669"/>
    <property type="project" value="InterPro"/>
</dbReference>
<dbReference type="GO" id="GO:2000352">
    <property type="term" value="P:negative regulation of endothelial cell apoptotic process"/>
    <property type="evidence" value="ECO:0000250"/>
    <property type="project" value="UniProtKB"/>
</dbReference>
<dbReference type="GO" id="GO:0043116">
    <property type="term" value="P:negative regulation of vascular permeability"/>
    <property type="evidence" value="ECO:0000250"/>
    <property type="project" value="UniProtKB"/>
</dbReference>
<dbReference type="GO" id="GO:0045766">
    <property type="term" value="P:positive regulation of angiogenesis"/>
    <property type="evidence" value="ECO:0000250"/>
    <property type="project" value="UniProtKB"/>
</dbReference>
<dbReference type="GO" id="GO:0010628">
    <property type="term" value="P:positive regulation of gene expression"/>
    <property type="evidence" value="ECO:0000250"/>
    <property type="project" value="UniProtKB"/>
</dbReference>
<dbReference type="GO" id="GO:2001214">
    <property type="term" value="P:positive regulation of vasculogenesis"/>
    <property type="evidence" value="ECO:0000266"/>
    <property type="project" value="RGD"/>
</dbReference>
<dbReference type="GO" id="GO:0072659">
    <property type="term" value="P:protein localization to plasma membrane"/>
    <property type="evidence" value="ECO:0000250"/>
    <property type="project" value="UniProtKB"/>
</dbReference>
<dbReference type="GO" id="GO:0015031">
    <property type="term" value="P:protein transport"/>
    <property type="evidence" value="ECO:0000250"/>
    <property type="project" value="UniProtKB"/>
</dbReference>
<dbReference type="GO" id="GO:0031623">
    <property type="term" value="P:receptor internalization"/>
    <property type="evidence" value="ECO:0000314"/>
    <property type="project" value="UniProtKB"/>
</dbReference>
<dbReference type="GO" id="GO:0008217">
    <property type="term" value="P:regulation of blood pressure"/>
    <property type="evidence" value="ECO:0000250"/>
    <property type="project" value="UniProtKB"/>
</dbReference>
<dbReference type="GO" id="GO:0008277">
    <property type="term" value="P:regulation of G protein-coupled receptor signaling pathway"/>
    <property type="evidence" value="ECO:0007669"/>
    <property type="project" value="InterPro"/>
</dbReference>
<dbReference type="GO" id="GO:0032355">
    <property type="term" value="P:response to estradiol"/>
    <property type="evidence" value="ECO:0000270"/>
    <property type="project" value="RGD"/>
</dbReference>
<dbReference type="GO" id="GO:0001666">
    <property type="term" value="P:response to hypoxia"/>
    <property type="evidence" value="ECO:0000270"/>
    <property type="project" value="RGD"/>
</dbReference>
<dbReference type="GO" id="GO:0032570">
    <property type="term" value="P:response to progesterone"/>
    <property type="evidence" value="ECO:0000270"/>
    <property type="project" value="RGD"/>
</dbReference>
<dbReference type="GO" id="GO:0002040">
    <property type="term" value="P:sprouting angiogenesis"/>
    <property type="evidence" value="ECO:0000250"/>
    <property type="project" value="UniProtKB"/>
</dbReference>
<dbReference type="GO" id="GO:0097084">
    <property type="term" value="P:vascular associated smooth muscle cell development"/>
    <property type="evidence" value="ECO:0000250"/>
    <property type="project" value="UniProtKB"/>
</dbReference>
<dbReference type="GO" id="GO:0001570">
    <property type="term" value="P:vasculogenesis"/>
    <property type="evidence" value="ECO:0000250"/>
    <property type="project" value="UniProtKB"/>
</dbReference>
<dbReference type="FunFam" id="1.10.150.510:FF:000003">
    <property type="entry name" value="Receptor activity-modifying protein 2"/>
    <property type="match status" value="1"/>
</dbReference>
<dbReference type="Gene3D" id="1.10.150.510">
    <property type="entry name" value="Receptor activity modifying family"/>
    <property type="match status" value="1"/>
</dbReference>
<dbReference type="InterPro" id="IPR006985">
    <property type="entry name" value="RAMP"/>
</dbReference>
<dbReference type="InterPro" id="IPR038126">
    <property type="entry name" value="RAMP_sf"/>
</dbReference>
<dbReference type="PANTHER" id="PTHR14076">
    <property type="entry name" value="RECEPTOR ACTIVITY MODIFYING PROTEIN RAMP"/>
    <property type="match status" value="1"/>
</dbReference>
<dbReference type="PANTHER" id="PTHR14076:SF9">
    <property type="entry name" value="RECEPTOR ACTIVITY-MODIFYING PROTEIN 2"/>
    <property type="match status" value="1"/>
</dbReference>
<dbReference type="Pfam" id="PF04901">
    <property type="entry name" value="RAMP"/>
    <property type="match status" value="1"/>
</dbReference>